<sequence length="206" mass="23332">MANLFKNILDSLKLTDDEDLDDYDDYVSELEEKERRKTERQEQRQAVKQEKRTFPSQRPAFSEEAPTSSSSKLSAASGSSDFADLRKERSQRMEKTNVSKVVPIRNPQKGLEVCIMKPTSFEDSQDICDMLLSGRAAVINLEGFDVDLAQRVMDFISGAVYSLNGKLHQISSYIFIISPDSVDISGDYLDLIRQNGFEVPTLNKDF</sequence>
<feature type="chain" id="PRO_0000334002" description="Cell division protein SepF">
    <location>
        <begin position="1"/>
        <end position="206"/>
    </location>
</feature>
<feature type="region of interest" description="Disordered" evidence="2">
    <location>
        <begin position="31"/>
        <end position="81"/>
    </location>
</feature>
<feature type="compositionally biased region" description="Basic and acidic residues" evidence="2">
    <location>
        <begin position="31"/>
        <end position="53"/>
    </location>
</feature>
<feature type="compositionally biased region" description="Low complexity" evidence="2">
    <location>
        <begin position="60"/>
        <end position="80"/>
    </location>
</feature>
<protein>
    <recommendedName>
        <fullName evidence="1">Cell division protein SepF</fullName>
    </recommendedName>
</protein>
<keyword id="KW-0131">Cell cycle</keyword>
<keyword id="KW-0132">Cell division</keyword>
<keyword id="KW-0963">Cytoplasm</keyword>
<keyword id="KW-1185">Reference proteome</keyword>
<keyword id="KW-0717">Septation</keyword>
<reference key="1">
    <citation type="submission" date="2007-11" db="EMBL/GenBank/DDBJ databases">
        <title>Complete genome sequence of Clostridium phytofermentans ISDg.</title>
        <authorList>
            <person name="Leschine S.B."/>
            <person name="Warnick T.A."/>
            <person name="Blanchard J.L."/>
            <person name="Schnell D.J."/>
            <person name="Petit E.L."/>
            <person name="LaTouf W.G."/>
            <person name="Copeland A."/>
            <person name="Lucas S."/>
            <person name="Lapidus A."/>
            <person name="Barry K."/>
            <person name="Glavina del Rio T."/>
            <person name="Dalin E."/>
            <person name="Tice H."/>
            <person name="Pitluck S."/>
            <person name="Kiss H."/>
            <person name="Brettin T."/>
            <person name="Bruce D."/>
            <person name="Detter J.C."/>
            <person name="Han C."/>
            <person name="Kuske C."/>
            <person name="Schmutz J."/>
            <person name="Larimer F."/>
            <person name="Land M."/>
            <person name="Hauser L."/>
            <person name="Kyrpides N."/>
            <person name="Kim E.A."/>
            <person name="Richardson P."/>
        </authorList>
    </citation>
    <scope>NUCLEOTIDE SEQUENCE [LARGE SCALE GENOMIC DNA]</scope>
    <source>
        <strain>ATCC 700394 / DSM 18823 / ISDg</strain>
    </source>
</reference>
<name>SEPF_LACP7</name>
<organism>
    <name type="scientific">Lachnoclostridium phytofermentans (strain ATCC 700394 / DSM 18823 / ISDg)</name>
    <name type="common">Clostridium phytofermentans</name>
    <dbReference type="NCBI Taxonomy" id="357809"/>
    <lineage>
        <taxon>Bacteria</taxon>
        <taxon>Bacillati</taxon>
        <taxon>Bacillota</taxon>
        <taxon>Clostridia</taxon>
        <taxon>Lachnospirales</taxon>
        <taxon>Lachnospiraceae</taxon>
    </lineage>
</organism>
<proteinExistence type="inferred from homology"/>
<dbReference type="EMBL" id="CP000885">
    <property type="protein sequence ID" value="ABX42722.1"/>
    <property type="molecule type" value="Genomic_DNA"/>
</dbReference>
<dbReference type="RefSeq" id="WP_012200376.1">
    <property type="nucleotide sequence ID" value="NC_010001.1"/>
</dbReference>
<dbReference type="SMR" id="A9KKZ0"/>
<dbReference type="STRING" id="357809.Cphy_2361"/>
<dbReference type="KEGG" id="cpy:Cphy_2361"/>
<dbReference type="eggNOG" id="COG1799">
    <property type="taxonomic scope" value="Bacteria"/>
</dbReference>
<dbReference type="HOGENOM" id="CLU_078499_4_0_9"/>
<dbReference type="OrthoDB" id="9815206at2"/>
<dbReference type="Proteomes" id="UP000000370">
    <property type="component" value="Chromosome"/>
</dbReference>
<dbReference type="GO" id="GO:0005737">
    <property type="term" value="C:cytoplasm"/>
    <property type="evidence" value="ECO:0007669"/>
    <property type="project" value="UniProtKB-SubCell"/>
</dbReference>
<dbReference type="GO" id="GO:0000917">
    <property type="term" value="P:division septum assembly"/>
    <property type="evidence" value="ECO:0007669"/>
    <property type="project" value="UniProtKB-KW"/>
</dbReference>
<dbReference type="GO" id="GO:0043093">
    <property type="term" value="P:FtsZ-dependent cytokinesis"/>
    <property type="evidence" value="ECO:0007669"/>
    <property type="project" value="UniProtKB-UniRule"/>
</dbReference>
<dbReference type="Gene3D" id="3.30.110.150">
    <property type="entry name" value="SepF-like protein"/>
    <property type="match status" value="1"/>
</dbReference>
<dbReference type="HAMAP" id="MF_01197">
    <property type="entry name" value="SepF"/>
    <property type="match status" value="1"/>
</dbReference>
<dbReference type="InterPro" id="IPR023052">
    <property type="entry name" value="Cell_div_SepF"/>
</dbReference>
<dbReference type="InterPro" id="IPR007561">
    <property type="entry name" value="Cell_div_SepF/SepF-rel"/>
</dbReference>
<dbReference type="InterPro" id="IPR038594">
    <property type="entry name" value="SepF-like_sf"/>
</dbReference>
<dbReference type="PANTHER" id="PTHR35798">
    <property type="entry name" value="CELL DIVISION PROTEIN SEPF"/>
    <property type="match status" value="1"/>
</dbReference>
<dbReference type="PANTHER" id="PTHR35798:SF1">
    <property type="entry name" value="CELL DIVISION PROTEIN SEPF"/>
    <property type="match status" value="1"/>
</dbReference>
<dbReference type="Pfam" id="PF04472">
    <property type="entry name" value="SepF"/>
    <property type="match status" value="1"/>
</dbReference>
<gene>
    <name evidence="1" type="primary">sepF</name>
    <name type="ordered locus">Cphy_2361</name>
</gene>
<comment type="function">
    <text evidence="1">Cell division protein that is part of the divisome complex and is recruited early to the Z-ring. Probably stimulates Z-ring formation, perhaps through the cross-linking of FtsZ protofilaments. Its function overlaps with FtsA.</text>
</comment>
<comment type="subunit">
    <text evidence="1">Homodimer. Interacts with FtsZ.</text>
</comment>
<comment type="subcellular location">
    <subcellularLocation>
        <location evidence="1">Cytoplasm</location>
    </subcellularLocation>
    <text evidence="1">Localizes to the division site, in a FtsZ-dependent manner.</text>
</comment>
<comment type="similarity">
    <text evidence="1">Belongs to the SepF family.</text>
</comment>
<evidence type="ECO:0000255" key="1">
    <source>
        <dbReference type="HAMAP-Rule" id="MF_01197"/>
    </source>
</evidence>
<evidence type="ECO:0000256" key="2">
    <source>
        <dbReference type="SAM" id="MobiDB-lite"/>
    </source>
</evidence>
<accession>A9KKZ0</accession>